<feature type="chain" id="PRO_0000146883" description="Adenosylcobinamide-GDP ribazoletransferase">
    <location>
        <begin position="1"/>
        <end position="248"/>
    </location>
</feature>
<feature type="transmembrane region" description="Helical" evidence="1">
    <location>
        <begin position="24"/>
        <end position="44"/>
    </location>
</feature>
<feature type="transmembrane region" description="Helical" evidence="1">
    <location>
        <begin position="70"/>
        <end position="90"/>
    </location>
</feature>
<feature type="transmembrane region" description="Helical" evidence="1">
    <location>
        <begin position="106"/>
        <end position="126"/>
    </location>
</feature>
<feature type="transmembrane region" description="Helical" evidence="1">
    <location>
        <begin position="134"/>
        <end position="154"/>
    </location>
</feature>
<feature type="transmembrane region" description="Helical" evidence="1">
    <location>
        <begin position="168"/>
        <end position="188"/>
    </location>
</feature>
<feature type="transmembrane region" description="Helical" evidence="1">
    <location>
        <begin position="189"/>
        <end position="209"/>
    </location>
</feature>
<feature type="transmembrane region" description="Helical" evidence="1">
    <location>
        <begin position="228"/>
        <end position="248"/>
    </location>
</feature>
<comment type="function">
    <text evidence="1">Joins adenosylcobinamide-GDP and alpha-ribazole to generate adenosylcobalamin (Ado-cobalamin). Also synthesizes adenosylcobalamin 5'-phosphate from adenosylcobinamide-GDP and alpha-ribazole 5'-phosphate.</text>
</comment>
<comment type="catalytic activity">
    <reaction evidence="1">
        <text>alpha-ribazole + adenosylcob(III)inamide-GDP = adenosylcob(III)alamin + GMP + H(+)</text>
        <dbReference type="Rhea" id="RHEA:16049"/>
        <dbReference type="ChEBI" id="CHEBI:10329"/>
        <dbReference type="ChEBI" id="CHEBI:15378"/>
        <dbReference type="ChEBI" id="CHEBI:18408"/>
        <dbReference type="ChEBI" id="CHEBI:58115"/>
        <dbReference type="ChEBI" id="CHEBI:60487"/>
        <dbReference type="EC" id="2.7.8.26"/>
    </reaction>
</comment>
<comment type="catalytic activity">
    <reaction evidence="1">
        <text>alpha-ribazole 5'-phosphate + adenosylcob(III)inamide-GDP = adenosylcob(III)alamin 5'-phosphate + GMP + H(+)</text>
        <dbReference type="Rhea" id="RHEA:23560"/>
        <dbReference type="ChEBI" id="CHEBI:15378"/>
        <dbReference type="ChEBI" id="CHEBI:57918"/>
        <dbReference type="ChEBI" id="CHEBI:58115"/>
        <dbReference type="ChEBI" id="CHEBI:60487"/>
        <dbReference type="ChEBI" id="CHEBI:60493"/>
        <dbReference type="EC" id="2.7.8.26"/>
    </reaction>
</comment>
<comment type="cofactor">
    <cofactor evidence="1">
        <name>Mg(2+)</name>
        <dbReference type="ChEBI" id="CHEBI:18420"/>
    </cofactor>
</comment>
<comment type="pathway">
    <text evidence="1">Cofactor biosynthesis; adenosylcobalamin biosynthesis; adenosylcobalamin from cob(II)yrinate a,c-diamide: step 7/7.</text>
</comment>
<comment type="subcellular location">
    <subcellularLocation>
        <location evidence="1">Cell membrane</location>
        <topology evidence="1">Multi-pass membrane protein</topology>
    </subcellularLocation>
</comment>
<comment type="similarity">
    <text evidence="1">Belongs to the CobS family.</text>
</comment>
<dbReference type="EC" id="2.7.8.26" evidence="1"/>
<dbReference type="EMBL" id="AE017262">
    <property type="protein sequence ID" value="AAT03931.1"/>
    <property type="molecule type" value="Genomic_DNA"/>
</dbReference>
<dbReference type="RefSeq" id="WP_003724690.1">
    <property type="nucleotide sequence ID" value="NC_002973.6"/>
</dbReference>
<dbReference type="KEGG" id="lmf:LMOf2365_1155"/>
<dbReference type="HOGENOM" id="CLU_057426_1_2_9"/>
<dbReference type="UniPathway" id="UPA00148">
    <property type="reaction ID" value="UER00238"/>
</dbReference>
<dbReference type="GO" id="GO:0005886">
    <property type="term" value="C:plasma membrane"/>
    <property type="evidence" value="ECO:0007669"/>
    <property type="project" value="UniProtKB-SubCell"/>
</dbReference>
<dbReference type="GO" id="GO:0051073">
    <property type="term" value="F:adenosylcobinamide-GDP ribazoletransferase activity"/>
    <property type="evidence" value="ECO:0007669"/>
    <property type="project" value="UniProtKB-UniRule"/>
</dbReference>
<dbReference type="GO" id="GO:0008818">
    <property type="term" value="F:cobalamin 5'-phosphate synthase activity"/>
    <property type="evidence" value="ECO:0007669"/>
    <property type="project" value="UniProtKB-UniRule"/>
</dbReference>
<dbReference type="GO" id="GO:0009236">
    <property type="term" value="P:cobalamin biosynthetic process"/>
    <property type="evidence" value="ECO:0007669"/>
    <property type="project" value="UniProtKB-UniRule"/>
</dbReference>
<dbReference type="HAMAP" id="MF_00719">
    <property type="entry name" value="CobS"/>
    <property type="match status" value="1"/>
</dbReference>
<dbReference type="InterPro" id="IPR003805">
    <property type="entry name" value="CobS"/>
</dbReference>
<dbReference type="NCBIfam" id="TIGR00317">
    <property type="entry name" value="cobS"/>
    <property type="match status" value="1"/>
</dbReference>
<dbReference type="PANTHER" id="PTHR34148">
    <property type="entry name" value="ADENOSYLCOBINAMIDE-GDP RIBAZOLETRANSFERASE"/>
    <property type="match status" value="1"/>
</dbReference>
<dbReference type="PANTHER" id="PTHR34148:SF1">
    <property type="entry name" value="ADENOSYLCOBINAMIDE-GDP RIBAZOLETRANSFERASE"/>
    <property type="match status" value="1"/>
</dbReference>
<dbReference type="Pfam" id="PF02654">
    <property type="entry name" value="CobS"/>
    <property type="match status" value="1"/>
</dbReference>
<name>COBS_LISMF</name>
<keyword id="KW-1003">Cell membrane</keyword>
<keyword id="KW-0169">Cobalamin biosynthesis</keyword>
<keyword id="KW-0460">Magnesium</keyword>
<keyword id="KW-0472">Membrane</keyword>
<keyword id="KW-0808">Transferase</keyword>
<keyword id="KW-0812">Transmembrane</keyword>
<keyword id="KW-1133">Transmembrane helix</keyword>
<reference key="1">
    <citation type="journal article" date="2004" name="Nucleic Acids Res.">
        <title>Whole genome comparisons of serotype 4b and 1/2a strains of the food-borne pathogen Listeria monocytogenes reveal new insights into the core genome components of this species.</title>
        <authorList>
            <person name="Nelson K.E."/>
            <person name="Fouts D.E."/>
            <person name="Mongodin E.F."/>
            <person name="Ravel J."/>
            <person name="DeBoy R.T."/>
            <person name="Kolonay J.F."/>
            <person name="Rasko D.A."/>
            <person name="Angiuoli S.V."/>
            <person name="Gill S.R."/>
            <person name="Paulsen I.T."/>
            <person name="Peterson J.D."/>
            <person name="White O."/>
            <person name="Nelson W.C."/>
            <person name="Nierman W.C."/>
            <person name="Beanan M.J."/>
            <person name="Brinkac L.M."/>
            <person name="Daugherty S.C."/>
            <person name="Dodson R.J."/>
            <person name="Durkin A.S."/>
            <person name="Madupu R."/>
            <person name="Haft D.H."/>
            <person name="Selengut J."/>
            <person name="Van Aken S.E."/>
            <person name="Khouri H.M."/>
            <person name="Fedorova N."/>
            <person name="Forberger H.A."/>
            <person name="Tran B."/>
            <person name="Kathariou S."/>
            <person name="Wonderling L.D."/>
            <person name="Uhlich G.A."/>
            <person name="Bayles D.O."/>
            <person name="Luchansky J.B."/>
            <person name="Fraser C.M."/>
        </authorList>
    </citation>
    <scope>NUCLEOTIDE SEQUENCE [LARGE SCALE GENOMIC DNA]</scope>
    <source>
        <strain>F2365</strain>
    </source>
</reference>
<gene>
    <name evidence="1" type="primary">cobS</name>
    <name type="ordered locus">LMOf2365_1155</name>
</gene>
<evidence type="ECO:0000255" key="1">
    <source>
        <dbReference type="HAMAP-Rule" id="MF_00719"/>
    </source>
</evidence>
<accession>Q720T3</accession>
<organism>
    <name type="scientific">Listeria monocytogenes serotype 4b (strain F2365)</name>
    <dbReference type="NCBI Taxonomy" id="265669"/>
    <lineage>
        <taxon>Bacteria</taxon>
        <taxon>Bacillati</taxon>
        <taxon>Bacillota</taxon>
        <taxon>Bacilli</taxon>
        <taxon>Bacillales</taxon>
        <taxon>Listeriaceae</taxon>
        <taxon>Listeria</taxon>
    </lineage>
</organism>
<proteinExistence type="inferred from homology"/>
<sequence length="248" mass="27139">MKTLILLIQFFTRIPLPVQINMDEINLKKGSALLPFVGVIIGAWNWLIFTLVALLMPLPVAIIAGLFAEIIITGGFHVDALADTADGLFSSRKRERMLEIMKDSRVGANGVIAICFYFLFYGSLFLSVPDTQQIGWLFFVLPIVAKGVTMLLFAKMTYAGSKEGLGSIFLGVPWWPVVIAQVIVLVALGAFFSYIGVIAYAGVILFTIIYRAFVYKRIGGMNGDTLGAGGQMGQLICLFCLVLLWGLI</sequence>
<protein>
    <recommendedName>
        <fullName evidence="1">Adenosylcobinamide-GDP ribazoletransferase</fullName>
        <ecNumber evidence="1">2.7.8.26</ecNumber>
    </recommendedName>
    <alternativeName>
        <fullName evidence="1">Cobalamin synthase</fullName>
    </alternativeName>
    <alternativeName>
        <fullName evidence="1">Cobalamin-5'-phosphate synthase</fullName>
    </alternativeName>
</protein>